<reference key="1">
    <citation type="journal article" date="2008" name="J. Bacteriol.">
        <title>Genetic and biochemical characterization of the poly(3-hydroxybutyrate-co-3-hydroxyvalerate) synthase in Haloferax mediterranei.</title>
        <authorList>
            <person name="Lu Q."/>
            <person name="Han J."/>
            <person name="Zhou L."/>
            <person name="Zhou J."/>
            <person name="Xiang H."/>
        </authorList>
    </citation>
    <scope>NUCLEOTIDE SEQUENCE [GENOMIC DNA]</scope>
    <scope>FUNCTION</scope>
    <scope>DISRUPTION PHENOTYPE</scope>
    <source>
        <strain>ATCC 33500 / DSM 1411 / JCM 8866 / NBRC 14739 / NCIMB 2177 / R-4</strain>
        <plasmid>pHM300</plasmid>
    </source>
</reference>
<reference key="2">
    <citation type="journal article" date="2012" name="J. Bacteriol.">
        <title>Complete genome sequence of the metabolically versatile halophilic archaeon Haloferax mediterranei, a poly(3-hydroxybutyrate-co-3-hydroxyvalerate) producer.</title>
        <authorList>
            <person name="Han J."/>
            <person name="Zhang F."/>
            <person name="Hou J."/>
            <person name="Liu X."/>
            <person name="Li M."/>
            <person name="Liu H."/>
            <person name="Cai L."/>
            <person name="Zhang B."/>
            <person name="Chen Y."/>
            <person name="Zhou J."/>
            <person name="Hu S."/>
            <person name="Xiang H."/>
        </authorList>
    </citation>
    <scope>NUCLEOTIDE SEQUENCE [LARGE SCALE GENOMIC DNA]</scope>
    <source>
        <strain>ATCC 33500 / DSM 1411 / JCM 8866 / NBRC 14739 / NCIMB 2177 / R-4</strain>
        <plasmid>pHM300</plasmid>
    </source>
</reference>
<reference key="3">
    <citation type="journal article" date="2014" name="PLoS Genet.">
        <title>Phylogenetically driven sequencing of extremely halophilic archaea reveals strategies for static and dynamic osmo-response.</title>
        <authorList>
            <person name="Becker E.A."/>
            <person name="Seitzer P.M."/>
            <person name="Tritt A."/>
            <person name="Larsen D."/>
            <person name="Krusor M."/>
            <person name="Yao A.I."/>
            <person name="Wu D."/>
            <person name="Madern D."/>
            <person name="Eisen J.A."/>
            <person name="Darling A.E."/>
            <person name="Facciotti M.T."/>
        </authorList>
    </citation>
    <scope>NUCLEOTIDE SEQUENCE [LARGE SCALE GENOMIC DNA]</scope>
    <source>
        <strain>ATCC 33500 / DSM 1411 / JCM 8866 / NBRC 14739 / NCIMB 2177 / R-4</strain>
        <plasmid>pHM300</plasmid>
    </source>
</reference>
<accession>I3R9Z3</accession>
<accession>B3FRM4</accession>
<organism>
    <name type="scientific">Haloferax mediterranei (strain ATCC 33500 / DSM 1411 / JCM 8866 / NBRC 14739 / NCIMB 2177 / R-4)</name>
    <name type="common">Halobacterium mediterranei</name>
    <dbReference type="NCBI Taxonomy" id="523841"/>
    <lineage>
        <taxon>Archaea</taxon>
        <taxon>Methanobacteriati</taxon>
        <taxon>Methanobacteriota</taxon>
        <taxon>Stenosarchaea group</taxon>
        <taxon>Halobacteria</taxon>
        <taxon>Halobacteriales</taxon>
        <taxon>Haloferacaceae</taxon>
        <taxon>Haloferax</taxon>
    </lineage>
</organism>
<proteinExistence type="evidence at protein level"/>
<protein>
    <recommendedName>
        <fullName>Poly(3-hydroxyalkanoate) polymerase subunit PhaE</fullName>
        <shortName>PHA polymerase</shortName>
        <ecNumber>2.3.1.-</ecNumber>
    </recommendedName>
    <alternativeName>
        <fullName>PHB synthase subunit PhaE</fullName>
    </alternativeName>
    <alternativeName>
        <fullName>Poly(3-hydroxybutyrate) polymerase subunit PhaE</fullName>
        <shortName>PHB polymerase</shortName>
    </alternativeName>
    <alternativeName>
        <fullName>Polyhydroxyalkanoic acid synthase subunit PhaE</fullName>
        <shortName>PHA synthase</shortName>
    </alternativeName>
</protein>
<feature type="chain" id="PRO_0000428874" description="Poly(3-hydroxyalkanoate) polymerase subunit PhaE">
    <location>
        <begin position="1"/>
        <end position="182"/>
    </location>
</feature>
<geneLocation type="plasmid">
    <name>pHM300</name>
</geneLocation>
<comment type="function">
    <text evidence="2">Involved in the production of polyhydroxyalkonic acids (PHAs), which are water-insoluble biopolymers used as intracellular energy reserve material when cells grow under conditions of nutrient limitation. PHAs are composed primarily of 3-hydroxybutyric acid (3HB) and 3-hydroxyvaleric acid (3HV). Required for the production of poly-beta-hydroxybutyrate (PHB) and poly(beta-hydroxybutyrate-co-beta-hydroxyvalerate) (PHBV).</text>
</comment>
<comment type="pathway">
    <text>Biopolymer metabolism; poly-(R)-3-hydroxybutanoate biosynthesis.</text>
</comment>
<comment type="subunit">
    <text evidence="1">Heterodimer with PhaC.</text>
</comment>
<comment type="disruption phenotype">
    <text evidence="2">Depletion of both phaC and phaE genes leads to complete loss of PHA synthase activity and PHBV production.</text>
</comment>
<comment type="biotechnology">
    <text>PHB and PHBV are desirable bioplastic due to their biodegradability, biocompatibility, and mechanical properties. However, PHBV has better mechanical properties than PHB.</text>
</comment>
<comment type="similarity">
    <text evidence="3">Belongs to the PHA/PHB synthase family.</text>
</comment>
<name>PHAE_HALMT</name>
<gene>
    <name type="primary">phaE</name>
    <name type="ordered locus">HFX_5220</name>
    <name type="ORF">C439_00145</name>
</gene>
<dbReference type="EC" id="2.3.1.-"/>
<dbReference type="EMBL" id="EU374220">
    <property type="protein sequence ID" value="ACB10369.1"/>
    <property type="molecule type" value="Genomic_DNA"/>
</dbReference>
<dbReference type="EMBL" id="CP001870">
    <property type="protein sequence ID" value="AFK21053.1"/>
    <property type="molecule type" value="Genomic_DNA"/>
</dbReference>
<dbReference type="EMBL" id="AOLO01000001">
    <property type="protein sequence ID" value="EMA05162.1"/>
    <property type="molecule type" value="Genomic_DNA"/>
</dbReference>
<dbReference type="RefSeq" id="WP_004056139.1">
    <property type="nucleotide sequence ID" value="NC_017943.1"/>
</dbReference>
<dbReference type="SMR" id="I3R9Z3"/>
<dbReference type="GeneID" id="40158349"/>
<dbReference type="KEGG" id="hme:HFX_5220"/>
<dbReference type="HOGENOM" id="CLU_1485849_0_0_2"/>
<dbReference type="OrthoDB" id="200001at2157"/>
<dbReference type="BRENDA" id="2.3.1.304">
    <property type="organism ID" value="2566"/>
</dbReference>
<dbReference type="UniPathway" id="UPA00917"/>
<dbReference type="Proteomes" id="UP000006469">
    <property type="component" value="Plasmid pHM300"/>
</dbReference>
<dbReference type="Proteomes" id="UP000011603">
    <property type="component" value="Unassembled WGS sequence"/>
</dbReference>
<dbReference type="GO" id="GO:0016746">
    <property type="term" value="F:acyltransferase activity"/>
    <property type="evidence" value="ECO:0007669"/>
    <property type="project" value="UniProtKB-KW"/>
</dbReference>
<dbReference type="GO" id="GO:0042621">
    <property type="term" value="P:poly(3-hydroxyalkanoate) biosynthetic process"/>
    <property type="evidence" value="ECO:0007669"/>
    <property type="project" value="UniProtKB-KW"/>
</dbReference>
<dbReference type="GO" id="GO:0042619">
    <property type="term" value="P:poly-hydroxybutyrate biosynthetic process"/>
    <property type="evidence" value="ECO:0007669"/>
    <property type="project" value="UniProtKB-KW"/>
</dbReference>
<evidence type="ECO:0000250" key="1"/>
<evidence type="ECO:0000269" key="2">
    <source>
    </source>
</evidence>
<evidence type="ECO:0000305" key="3"/>
<sequence length="182" mass="20452">MSQQKGDEWTMYAAEMNETMLAALERNVEAQTQFVESWLDALEETPEMSTETISEGLNGYARAYEVWMNAAEQQFERASDAFEGEDVSANEFRDIWLNSANEAFKEVMGTSAFAAATGQTVEDALEMQREVDEAAQSTLRTLGFATEGDIDEVAERLVELERRQHAVETKLDRLLDAMDVEG</sequence>
<keyword id="KW-0012">Acyltransferase</keyword>
<keyword id="KW-0577">PHA biosynthesis</keyword>
<keyword id="KW-0583">PHB biosynthesis</keyword>
<keyword id="KW-0614">Plasmid</keyword>
<keyword id="KW-0808">Transferase</keyword>